<proteinExistence type="evidence at protein level"/>
<gene>
    <name type="primary">CYT1</name>
    <name type="synonym">CTC1</name>
    <name type="ordered locus">YOR065W</name>
    <name type="ORF">YOR29-16</name>
</gene>
<evidence type="ECO:0000255" key="1">
    <source>
        <dbReference type="PROSITE-ProRule" id="PRU00433"/>
    </source>
</evidence>
<evidence type="ECO:0000256" key="2">
    <source>
        <dbReference type="SAM" id="MobiDB-lite"/>
    </source>
</evidence>
<evidence type="ECO:0000269" key="3">
    <source>
    </source>
</evidence>
<evidence type="ECO:0000269" key="4">
    <source>
    </source>
</evidence>
<evidence type="ECO:0000269" key="5">
    <source>
    </source>
</evidence>
<evidence type="ECO:0000269" key="6">
    <source>
    </source>
</evidence>
<evidence type="ECO:0000269" key="7">
    <source>
    </source>
</evidence>
<evidence type="ECO:0000269" key="8">
    <source>
    </source>
</evidence>
<evidence type="ECO:0000269" key="9">
    <source>
    </source>
</evidence>
<evidence type="ECO:0000269" key="10">
    <source>
    </source>
</evidence>
<evidence type="ECO:0000269" key="11">
    <source>
    </source>
</evidence>
<evidence type="ECO:0000269" key="12">
    <source>
    </source>
</evidence>
<evidence type="ECO:0000269" key="13">
    <source>
    </source>
</evidence>
<evidence type="ECO:0000305" key="14"/>
<evidence type="ECO:0000305" key="15">
    <source>
    </source>
</evidence>
<evidence type="ECO:0007744" key="16">
    <source>
        <dbReference type="PDB" id="1EZV"/>
    </source>
</evidence>
<evidence type="ECO:0007744" key="17">
    <source>
        <dbReference type="PDB" id="1KYO"/>
    </source>
</evidence>
<evidence type="ECO:0007829" key="18">
    <source>
        <dbReference type="PDB" id="1P84"/>
    </source>
</evidence>
<evidence type="ECO:0007829" key="19">
    <source>
        <dbReference type="PDB" id="3CX5"/>
    </source>
</evidence>
<evidence type="ECO:0007829" key="20">
    <source>
        <dbReference type="PDB" id="4PD4"/>
    </source>
</evidence>
<evidence type="ECO:0007829" key="21">
    <source>
        <dbReference type="PDB" id="6T0B"/>
    </source>
</evidence>
<evidence type="ECO:0007829" key="22">
    <source>
        <dbReference type="PDB" id="8E7S"/>
    </source>
</evidence>
<evidence type="ECO:0007829" key="23">
    <source>
        <dbReference type="PDB" id="9ETZ"/>
    </source>
</evidence>
<name>CY1_YEAST</name>
<comment type="function">
    <text evidence="9 15">Component of the ubiquinol-cytochrome c oxidoreductase, a multisubunit transmembrane complex that is part of the mitochondrial electron transport chain which drives oxidative phosphorylation. The respiratory chain contains 3 multisubunit complexes succinate dehydrogenase (complex II, CII), ubiquinol-cytochrome c oxidoreductase (cytochrome b-c1 complex, complex III, CIII) and cytochrome c oxidase (complex IV, CIV), that cooperate to transfer electrons derived from NADH and succinate to molecular oxygen, creating an electrochemical gradient over the inner membrane that drives transmembrane transport and the ATP synthase. The cytochrome b-c1 complex catalyzes electron transfer from ubiquinol to cytochrome c, linking this redox reaction to translocation of protons across the mitochondrial inner membrane, with protons being carried across the membrane as hydrogens on the quinol. In the process called Q cycle, 2 protons are consumed from the matrix, 4 protons are released into the intermembrane space and 2 electrons are passed to cytochrome c (Probable). Cytochrome c1 is a catalytic core subunit containing a c-type heme. It transfers electrons from the [2Fe-2S] iron-sulfur cluster of the Rieske protein to cytochrome c (PubMed:18390544).</text>
</comment>
<comment type="catalytic activity">
    <reaction evidence="6">
        <text>a quinol + 2 Fe(III)-[cytochrome c](out) = a quinone + 2 Fe(II)-[cytochrome c](out) + 2 H(+)(out)</text>
        <dbReference type="Rhea" id="RHEA:11484"/>
        <dbReference type="Rhea" id="RHEA-COMP:10350"/>
        <dbReference type="Rhea" id="RHEA-COMP:14399"/>
        <dbReference type="ChEBI" id="CHEBI:15378"/>
        <dbReference type="ChEBI" id="CHEBI:24646"/>
        <dbReference type="ChEBI" id="CHEBI:29033"/>
        <dbReference type="ChEBI" id="CHEBI:29034"/>
        <dbReference type="ChEBI" id="CHEBI:132124"/>
        <dbReference type="EC" id="7.1.1.8"/>
    </reaction>
</comment>
<comment type="cofactor">
    <cofactor evidence="9 10">
        <name>heme c</name>
        <dbReference type="ChEBI" id="CHEBI:61717"/>
    </cofactor>
    <text evidence="9 10">Binds 1 heme c group covalently per subunit.</text>
</comment>
<comment type="subunit">
    <text evidence="3 4 5 7 9 10 11">Component of the ubiquinol-cytochrome c oxidoreductase (cytochrome b-c1 complex, complex III, CIII), a multisubunit enzyme composed of 10 subunits. The complex is composed of 3 respiratory subunits cytochrome b (COB), cytochrome c1 (CYT1) and Rieske protein (RIP1), 2 core protein subunits COR1 and QCR2, and 5 low-molecular weight protein subunits QCR6, QCR7, QCR8, QCR9 and QCR10 (PubMed:10873857, PubMed:11880631, PubMed:18390544, PubMed:30598554). The complex exists as an obligatory dimer and forms supercomplexes (SCs) in the inner mitochondrial membrane with a monomer or a dimer of cytochrome c oxidase (complex IV, CIV), resulting in 2 different assemblies (supercomplexes III(2)IV and III(2)IV(2)) (PubMed:10764779, PubMed:10775262, PubMed:30598554, PubMed:30598556). CYT1 interacts with COX5A at the CIII-CIV interface (PubMed:30598554).</text>
</comment>
<comment type="subcellular location">
    <subcellularLocation>
        <location evidence="9 10">Mitochondrion inner membrane</location>
        <topology evidence="9 10">Single-pass membrane protein</topology>
    </subcellularLocation>
</comment>
<comment type="miscellaneous">
    <text evidence="8">Present with 39900 molecules/cell in log phase SD medium.</text>
</comment>
<comment type="similarity">
    <text evidence="14">Belongs to the cytochrome c family.</text>
</comment>
<reference key="1">
    <citation type="journal article" date="1984" name="EMBO J.">
        <title>Sequencing of the nuclear gene for the yeast cytochrome c1 precursor reveals an unusually complex amino-terminal presequence.</title>
        <authorList>
            <person name="Sadler I."/>
            <person name="Suda K."/>
            <person name="Schatz G."/>
            <person name="Kaudewitz F."/>
            <person name="Haid A."/>
        </authorList>
    </citation>
    <scope>NUCLEOTIDE SEQUENCE [GENOMIC DNA]</scope>
    <scope>POST-TRANSLATIONAL CLEAVAGE</scope>
</reference>
<reference key="2">
    <citation type="journal article" date="1997" name="Yeast">
        <title>The sequence of a 54.7 kb fragment of yeast chromosome XV reveals the presence of two tRNAs and 24 new open reading frames.</title>
        <authorList>
            <person name="Valens M."/>
            <person name="Bohn C."/>
            <person name="Daignan-Fornier B."/>
            <person name="Dang V.-D."/>
            <person name="Bolotin-Fukuhara M."/>
        </authorList>
    </citation>
    <scope>NUCLEOTIDE SEQUENCE [GENOMIC DNA]</scope>
</reference>
<reference key="3">
    <citation type="journal article" date="1997" name="Nature">
        <title>The nucleotide sequence of Saccharomyces cerevisiae chromosome XV.</title>
        <authorList>
            <person name="Dujon B."/>
            <person name="Albermann K."/>
            <person name="Aldea M."/>
            <person name="Alexandraki D."/>
            <person name="Ansorge W."/>
            <person name="Arino J."/>
            <person name="Benes V."/>
            <person name="Bohn C."/>
            <person name="Bolotin-Fukuhara M."/>
            <person name="Bordonne R."/>
            <person name="Boyer J."/>
            <person name="Camasses A."/>
            <person name="Casamayor A."/>
            <person name="Casas C."/>
            <person name="Cheret G."/>
            <person name="Cziepluch C."/>
            <person name="Daignan-Fornier B."/>
            <person name="Dang V.-D."/>
            <person name="de Haan M."/>
            <person name="Delius H."/>
            <person name="Durand P."/>
            <person name="Fairhead C."/>
            <person name="Feldmann H."/>
            <person name="Gaillon L."/>
            <person name="Galisson F."/>
            <person name="Gamo F.-J."/>
            <person name="Gancedo C."/>
            <person name="Goffeau A."/>
            <person name="Goulding S.E."/>
            <person name="Grivell L.A."/>
            <person name="Habbig B."/>
            <person name="Hand N.J."/>
            <person name="Hani J."/>
            <person name="Hattenhorst U."/>
            <person name="Hebling U."/>
            <person name="Hernando Y."/>
            <person name="Herrero E."/>
            <person name="Heumann K."/>
            <person name="Hiesel R."/>
            <person name="Hilger F."/>
            <person name="Hofmann B."/>
            <person name="Hollenberg C.P."/>
            <person name="Hughes B."/>
            <person name="Jauniaux J.-C."/>
            <person name="Kalogeropoulos A."/>
            <person name="Katsoulou C."/>
            <person name="Kordes E."/>
            <person name="Lafuente M.J."/>
            <person name="Landt O."/>
            <person name="Louis E.J."/>
            <person name="Maarse A.C."/>
            <person name="Madania A."/>
            <person name="Mannhaupt G."/>
            <person name="Marck C."/>
            <person name="Martin R.P."/>
            <person name="Mewes H.-W."/>
            <person name="Michaux G."/>
            <person name="Paces V."/>
            <person name="Parle-McDermott A.G."/>
            <person name="Pearson B.M."/>
            <person name="Perrin A."/>
            <person name="Pettersson B."/>
            <person name="Poch O."/>
            <person name="Pohl T.M."/>
            <person name="Poirey R."/>
            <person name="Portetelle D."/>
            <person name="Pujol A."/>
            <person name="Purnelle B."/>
            <person name="Ramezani Rad M."/>
            <person name="Rechmann S."/>
            <person name="Schwager C."/>
            <person name="Schweizer M."/>
            <person name="Sor F."/>
            <person name="Sterky F."/>
            <person name="Tarassov I.A."/>
            <person name="Teodoru C."/>
            <person name="Tettelin H."/>
            <person name="Thierry A."/>
            <person name="Tobiasch E."/>
            <person name="Tzermia M."/>
            <person name="Uhlen M."/>
            <person name="Unseld M."/>
            <person name="Valens M."/>
            <person name="Vandenbol M."/>
            <person name="Vetter I."/>
            <person name="Vlcek C."/>
            <person name="Voet M."/>
            <person name="Volckaert G."/>
            <person name="Voss H."/>
            <person name="Wambutt R."/>
            <person name="Wedler H."/>
            <person name="Wiemann S."/>
            <person name="Winsor B."/>
            <person name="Wolfe K.H."/>
            <person name="Zollner A."/>
            <person name="Zumstein E."/>
            <person name="Kleine K."/>
        </authorList>
    </citation>
    <scope>NUCLEOTIDE SEQUENCE [LARGE SCALE GENOMIC DNA]</scope>
    <source>
        <strain>ATCC 204508 / S288c</strain>
    </source>
</reference>
<reference key="4">
    <citation type="journal article" date="2014" name="G3 (Bethesda)">
        <title>The reference genome sequence of Saccharomyces cerevisiae: Then and now.</title>
        <authorList>
            <person name="Engel S.R."/>
            <person name="Dietrich F.S."/>
            <person name="Fisk D.G."/>
            <person name="Binkley G."/>
            <person name="Balakrishnan R."/>
            <person name="Costanzo M.C."/>
            <person name="Dwight S.S."/>
            <person name="Hitz B.C."/>
            <person name="Karra K."/>
            <person name="Nash R.S."/>
            <person name="Weng S."/>
            <person name="Wong E.D."/>
            <person name="Lloyd P."/>
            <person name="Skrzypek M.S."/>
            <person name="Miyasato S.R."/>
            <person name="Simison M."/>
            <person name="Cherry J.M."/>
        </authorList>
    </citation>
    <scope>GENOME REANNOTATION</scope>
    <source>
        <strain>ATCC 204508 / S288c</strain>
    </source>
</reference>
<reference key="5">
    <citation type="journal article" date="1998" name="J. Biol. Chem.">
        <title>Two distinct and independent mitochondrial targeting signals function in the sorting of an inner membrane protein, cytochrome c1.</title>
        <authorList>
            <person name="Arnold I."/>
            <person name="Foelsch H."/>
            <person name="Neupert W."/>
            <person name="Stuart R.A."/>
        </authorList>
    </citation>
    <scope>POST-TRANSLATIONAL CLEAVAGE</scope>
    <scope>TOPOLOGY</scope>
</reference>
<reference key="6">
    <citation type="journal article" date="2000" name="EMBO J.">
        <title>Supercomplexes in the respiratory chains of yeast and mammalian mitochondria.</title>
        <authorList>
            <person name="Schaegger H."/>
            <person name="Pfeiffer K."/>
        </authorList>
    </citation>
    <scope>FORMATION OF CYTOCHROME BC1-CYTOCHROME C OXIDASE SUPERCOMPLEX</scope>
</reference>
<reference key="7">
    <citation type="journal article" date="2000" name="J. Biol. Chem.">
        <title>The cytochrome bc1 and cytochrome c oxidase complexes associate to form a single supracomplex in yeast mitochondria.</title>
        <authorList>
            <person name="Cruciat C.M."/>
            <person name="Brunner S."/>
            <person name="Baumann F."/>
            <person name="Neupert W."/>
            <person name="Stuart R.A."/>
        </authorList>
    </citation>
    <scope>FORMATION OF CYTOCHROME BC1-CYTOCHROME C OXIDASE SUPERCOMPLEX</scope>
</reference>
<reference key="8">
    <citation type="journal article" date="2001" name="J. Biol. Chem.">
        <title>Role of Arg-166 in yeast cytochrome C1.</title>
        <authorList>
            <person name="Ahmad Z."/>
            <person name="Sherman F."/>
        </authorList>
    </citation>
    <scope>CATALYTIC ACTIVITY</scope>
    <scope>MUTAGENESIS OF ARG-166</scope>
</reference>
<reference key="9">
    <citation type="journal article" date="2003" name="Nature">
        <title>Global analysis of protein expression in yeast.</title>
        <authorList>
            <person name="Ghaemmaghami S."/>
            <person name="Huh W.-K."/>
            <person name="Bower K."/>
            <person name="Howson R.W."/>
            <person name="Belle A."/>
            <person name="Dephoure N."/>
            <person name="O'Shea E.K."/>
            <person name="Weissman J.S."/>
        </authorList>
    </citation>
    <scope>LEVEL OF PROTEIN EXPRESSION [LARGE SCALE ANALYSIS]</scope>
</reference>
<reference evidence="16" key="10">
    <citation type="journal article" date="2000" name="Structure">
        <title>Structure at 2.3 A resolution of the cytochrome bc1 complex from the yeast Saccharomyces cerevisiae co-crystallized with an antibody Fv fragment.</title>
        <authorList>
            <person name="Hunte C."/>
            <person name="Koepke J."/>
            <person name="Lange C."/>
            <person name="Rossmanith T."/>
            <person name="Michel H."/>
        </authorList>
    </citation>
    <scope>X-RAY CRYSTALLOGRAPHY (2.3 ANGSTROMS) IN COMPLEX WITH HEME</scope>
</reference>
<reference evidence="17" key="11">
    <citation type="journal article" date="2002" name="Proc. Natl. Acad. Sci. U.S.A.">
        <title>Crystal structure of the yeast cytochrome bc1 complex with its bound substrate cytochrome c.</title>
        <authorList>
            <person name="Lange C."/>
            <person name="Hunte C."/>
        </authorList>
    </citation>
    <scope>X-RAY CRYSTALLOGRAPHY (2.97 ANGSTROMS) IN COMPLEX WITH HEME</scope>
    <scope>MUTAGENESIS OF LYS-288; LYS-289 AND LYS-296</scope>
</reference>
<reference key="12">
    <citation type="journal article" date="2008" name="J. Biol. Chem.">
        <title>Structure of complex III with bound cytochrome c in reduced state and definition of a minimal core interface for electron transfer.</title>
        <authorList>
            <person name="Solmaz S.R."/>
            <person name="Hunte C."/>
        </authorList>
    </citation>
    <scope>X-RAY CRYSTALLOGRAPHY (1.90 ANGSTROMS)</scope>
</reference>
<reference key="13">
    <citation type="journal article" date="2019" name="Nat. Struct. Mol. Biol.">
        <title>Cryo-EM structure of the yeast respiratory supercomplex.</title>
        <authorList>
            <person name="Rathore S."/>
            <person name="Berndtsson J."/>
            <person name="Marin-Buera L."/>
            <person name="Conrad J."/>
            <person name="Carroni M."/>
            <person name="Brzezinski P."/>
            <person name="Ott M."/>
        </authorList>
    </citation>
    <scope>STRUCTURE BY ELECTRON MICROSCOPY (3.23 ANGSTROMS)</scope>
</reference>
<reference key="14">
    <citation type="journal article" date="2019" name="Nat. Struct. Mol. Biol.">
        <title>Structure of yeast cytochrome c oxidase in a supercomplex with cytochrome bc1.</title>
        <authorList>
            <person name="Hartley A.M."/>
            <person name="Lukoyanova N."/>
            <person name="Zhang Y."/>
            <person name="Cabrera-Orefice A."/>
            <person name="Arnold S."/>
            <person name="Meunier B."/>
            <person name="Pinotsis N."/>
            <person name="Marechal A."/>
        </authorList>
    </citation>
    <scope>STRUCTURE BY ELECTRON MICROSCOPY (3.35 ANGSTROMS) IN COMPLEX WITH HEME</scope>
</reference>
<sequence length="309" mass="34055">MFSNLSKRWAQRTLSKSFYSTATGAASKSGKLTQKLVTAGVAAAGITASTLLYADSLTAEAMTAAEHGLHAPAYAWSHNGPFETFDHASIRRGYQVYREVCAACHSLDRVAWRTLVGVSHTNEEVRNMAEEFEYDDEPDEQGNPKKRPGKLSDYIPGPYPNEQAARAANQGALPPDLSLIVKARHGGCDYIFSLLTGYPDEPPAGVALPPGSNYNPYFPGGSIAMARVLFDDMVEYEDGTPATTSQMAKDVTTFLNWCAEPEHDERKRLGLKTVIILSSLYLLSIWVKKFKWAGIKTRKFVFNPPKPRK</sequence>
<protein>
    <recommendedName>
        <fullName>Cytochrome c1, heme protein, mitochondrial</fullName>
        <ecNumber evidence="6">7.1.1.8</ecNumber>
    </recommendedName>
    <alternativeName>
        <fullName>Complex III subunit 4</fullName>
    </alternativeName>
    <alternativeName>
        <fullName>Complex III subunit IV</fullName>
    </alternativeName>
    <alternativeName>
        <fullName>Cytochrome b-c1 complex subunit 4</fullName>
    </alternativeName>
    <alternativeName>
        <fullName>Ubiquinol-cytochrome c oxidoreductase cytochrome c1 subunit</fullName>
        <shortName>Cytochrome c-1</shortName>
    </alternativeName>
</protein>
<accession>P07143</accession>
<accession>D6W2C8</accession>
<dbReference type="EC" id="7.1.1.8" evidence="6"/>
<dbReference type="EMBL" id="X00791">
    <property type="protein sequence ID" value="CAA25375.1"/>
    <property type="molecule type" value="Genomic_DNA"/>
</dbReference>
<dbReference type="EMBL" id="Z74973">
    <property type="protein sequence ID" value="CAA99258.1"/>
    <property type="molecule type" value="Genomic_DNA"/>
</dbReference>
<dbReference type="EMBL" id="Z70678">
    <property type="protein sequence ID" value="CAA94550.1"/>
    <property type="molecule type" value="Genomic_DNA"/>
</dbReference>
<dbReference type="EMBL" id="BK006948">
    <property type="protein sequence ID" value="DAA10844.1"/>
    <property type="molecule type" value="Genomic_DNA"/>
</dbReference>
<dbReference type="PIR" id="A22737">
    <property type="entry name" value="CCBY1H"/>
</dbReference>
<dbReference type="RefSeq" id="NP_014708.1">
    <property type="nucleotide sequence ID" value="NM_001183484.1"/>
</dbReference>
<dbReference type="PDB" id="1EZV">
    <property type="method" value="X-ray"/>
    <property type="resolution" value="2.30 A"/>
    <property type="chains" value="D=62-306"/>
</dbReference>
<dbReference type="PDB" id="1KB9">
    <property type="method" value="X-ray"/>
    <property type="resolution" value="2.30 A"/>
    <property type="chains" value="D=62-307"/>
</dbReference>
<dbReference type="PDB" id="1KYO">
    <property type="method" value="X-ray"/>
    <property type="resolution" value="2.97 A"/>
    <property type="chains" value="D/O=62-309"/>
</dbReference>
<dbReference type="PDB" id="1P84">
    <property type="method" value="X-ray"/>
    <property type="resolution" value="2.50 A"/>
    <property type="chains" value="D=62-307"/>
</dbReference>
<dbReference type="PDB" id="2IBZ">
    <property type="method" value="X-ray"/>
    <property type="resolution" value="2.30 A"/>
    <property type="chains" value="D=62-309"/>
</dbReference>
<dbReference type="PDB" id="3CX5">
    <property type="method" value="X-ray"/>
    <property type="resolution" value="1.90 A"/>
    <property type="chains" value="D/O=62-309"/>
</dbReference>
<dbReference type="PDB" id="3CXH">
    <property type="method" value="X-ray"/>
    <property type="resolution" value="2.50 A"/>
    <property type="chains" value="D/O=62-309"/>
</dbReference>
<dbReference type="PDB" id="4PD4">
    <property type="method" value="X-ray"/>
    <property type="resolution" value="3.04 A"/>
    <property type="chains" value="D=62-309"/>
</dbReference>
<dbReference type="PDB" id="6GIQ">
    <property type="method" value="EM"/>
    <property type="resolution" value="3.23 A"/>
    <property type="chains" value="D/O=1-309"/>
</dbReference>
<dbReference type="PDB" id="6HU9">
    <property type="method" value="EM"/>
    <property type="resolution" value="3.35 A"/>
    <property type="chains" value="D/O=62-309"/>
</dbReference>
<dbReference type="PDB" id="6T0B">
    <property type="method" value="EM"/>
    <property type="resolution" value="2.80 A"/>
    <property type="chains" value="D/O=62-309"/>
</dbReference>
<dbReference type="PDB" id="6T15">
    <property type="method" value="EM"/>
    <property type="resolution" value="3.29 A"/>
    <property type="chains" value="D/O=62-309"/>
</dbReference>
<dbReference type="PDB" id="6YMX">
    <property type="method" value="EM"/>
    <property type="resolution" value="3.17 A"/>
    <property type="chains" value="D/O=62-309"/>
</dbReference>
<dbReference type="PDB" id="8E7S">
    <property type="method" value="EM"/>
    <property type="resolution" value="3.20 A"/>
    <property type="chains" value="L/l=1-309"/>
</dbReference>
<dbReference type="PDB" id="8EC0">
    <property type="method" value="EM"/>
    <property type="resolution" value="3.30 A"/>
    <property type="chains" value="L/l=1-309"/>
</dbReference>
<dbReference type="PDB" id="8YHQ">
    <property type="method" value="EM"/>
    <property type="resolution" value="2.42 A"/>
    <property type="chains" value="D/M=62-309"/>
</dbReference>
<dbReference type="PDB" id="8YIN">
    <property type="method" value="EM"/>
    <property type="resolution" value="2.74 A"/>
    <property type="chains" value="D/O=62-309"/>
</dbReference>
<dbReference type="PDB" id="8ZMT">
    <property type="method" value="EM"/>
    <property type="resolution" value="2.52 A"/>
    <property type="chains" value="D/O=62-309"/>
</dbReference>
<dbReference type="PDB" id="9ETZ">
    <property type="method" value="EM"/>
    <property type="resolution" value="2.40 A"/>
    <property type="chains" value="D/O=62-308"/>
</dbReference>
<dbReference type="PDBsum" id="1EZV"/>
<dbReference type="PDBsum" id="1KB9"/>
<dbReference type="PDBsum" id="1KYO"/>
<dbReference type="PDBsum" id="1P84"/>
<dbReference type="PDBsum" id="2IBZ"/>
<dbReference type="PDBsum" id="3CX5"/>
<dbReference type="PDBsum" id="3CXH"/>
<dbReference type="PDBsum" id="4PD4"/>
<dbReference type="PDBsum" id="6GIQ"/>
<dbReference type="PDBsum" id="6HU9"/>
<dbReference type="PDBsum" id="6T0B"/>
<dbReference type="PDBsum" id="6T15"/>
<dbReference type="PDBsum" id="6YMX"/>
<dbReference type="PDBsum" id="8E7S"/>
<dbReference type="PDBsum" id="8EC0"/>
<dbReference type="PDBsum" id="8YHQ"/>
<dbReference type="PDBsum" id="8YIN"/>
<dbReference type="PDBsum" id="8ZMT"/>
<dbReference type="PDBsum" id="9ETZ"/>
<dbReference type="EMDB" id="EMD-0262"/>
<dbReference type="EMDB" id="EMD-10317"/>
<dbReference type="EMDB" id="EMD-10340"/>
<dbReference type="EMDB" id="EMD-10847"/>
<dbReference type="EMDB" id="EMD-19963"/>
<dbReference type="EMDB" id="EMD-27940"/>
<dbReference type="EMDB" id="EMD-28011"/>
<dbReference type="SMR" id="P07143"/>
<dbReference type="BioGRID" id="34464">
    <property type="interactions" value="525"/>
</dbReference>
<dbReference type="ComplexPortal" id="CPX-567">
    <property type="entry name" value="Mitochondrial respiratory chain complex III"/>
</dbReference>
<dbReference type="DIP" id="DIP-4166N"/>
<dbReference type="FunCoup" id="P07143">
    <property type="interactions" value="898"/>
</dbReference>
<dbReference type="IntAct" id="P07143">
    <property type="interactions" value="25"/>
</dbReference>
<dbReference type="MINT" id="P07143"/>
<dbReference type="STRING" id="4932.YOR065W"/>
<dbReference type="TCDB" id="3.D.3.3.1">
    <property type="family name" value="the proton-translocating quinol:cytochrome c reductase (qcr) superfamily"/>
</dbReference>
<dbReference type="PaxDb" id="4932-YOR065W"/>
<dbReference type="PeptideAtlas" id="P07143"/>
<dbReference type="EnsemblFungi" id="YOR065W_mRNA">
    <property type="protein sequence ID" value="YOR065W"/>
    <property type="gene ID" value="YOR065W"/>
</dbReference>
<dbReference type="GeneID" id="854231"/>
<dbReference type="KEGG" id="sce:YOR065W"/>
<dbReference type="AGR" id="SGD:S000005591"/>
<dbReference type="SGD" id="S000005591">
    <property type="gene designation" value="CYT1"/>
</dbReference>
<dbReference type="VEuPathDB" id="FungiDB:YOR065W"/>
<dbReference type="eggNOG" id="KOG3052">
    <property type="taxonomic scope" value="Eukaryota"/>
</dbReference>
<dbReference type="GeneTree" id="ENSGT00390000012445"/>
<dbReference type="HOGENOM" id="CLU_040334_1_1_1"/>
<dbReference type="InParanoid" id="P07143"/>
<dbReference type="OMA" id="WVKKFKW"/>
<dbReference type="OrthoDB" id="5925at2759"/>
<dbReference type="BioCyc" id="MetaCyc:MONOMER3O-103"/>
<dbReference type="BioCyc" id="YEAST:MONOMER3O-103"/>
<dbReference type="Reactome" id="R-SCE-611105">
    <property type="pathway name" value="Respiratory electron transport"/>
</dbReference>
<dbReference type="Reactome" id="R-SCE-9865878">
    <property type="pathway name" value="Complex III assembly"/>
</dbReference>
<dbReference type="BioGRID-ORCS" id="854231">
    <property type="hits" value="9 hits in 10 CRISPR screens"/>
</dbReference>
<dbReference type="EvolutionaryTrace" id="P07143"/>
<dbReference type="PRO" id="PR:P07143"/>
<dbReference type="Proteomes" id="UP000002311">
    <property type="component" value="Chromosome XV"/>
</dbReference>
<dbReference type="RNAct" id="P07143">
    <property type="molecule type" value="protein"/>
</dbReference>
<dbReference type="GO" id="GO:0005829">
    <property type="term" value="C:cytosol"/>
    <property type="evidence" value="ECO:0000304"/>
    <property type="project" value="Reactome"/>
</dbReference>
<dbReference type="GO" id="GO:0005743">
    <property type="term" value="C:mitochondrial inner membrane"/>
    <property type="evidence" value="ECO:0000314"/>
    <property type="project" value="ComplexPortal"/>
</dbReference>
<dbReference type="GO" id="GO:0005758">
    <property type="term" value="C:mitochondrial intermembrane space"/>
    <property type="evidence" value="ECO:0000304"/>
    <property type="project" value="Reactome"/>
</dbReference>
<dbReference type="GO" id="GO:0005739">
    <property type="term" value="C:mitochondrion"/>
    <property type="evidence" value="ECO:0007005"/>
    <property type="project" value="SGD"/>
</dbReference>
<dbReference type="GO" id="GO:0045275">
    <property type="term" value="C:respiratory chain complex III"/>
    <property type="evidence" value="ECO:0000314"/>
    <property type="project" value="SGD"/>
</dbReference>
<dbReference type="GO" id="GO:0020037">
    <property type="term" value="F:heme binding"/>
    <property type="evidence" value="ECO:0007669"/>
    <property type="project" value="InterPro"/>
</dbReference>
<dbReference type="GO" id="GO:0046872">
    <property type="term" value="F:metal ion binding"/>
    <property type="evidence" value="ECO:0007669"/>
    <property type="project" value="UniProtKB-KW"/>
</dbReference>
<dbReference type="GO" id="GO:0008121">
    <property type="term" value="F:ubiquinol-cytochrome-c reductase activity"/>
    <property type="evidence" value="ECO:0000315"/>
    <property type="project" value="SGD"/>
</dbReference>
<dbReference type="GO" id="GO:0045333">
    <property type="term" value="P:cellular respiration"/>
    <property type="evidence" value="ECO:0000314"/>
    <property type="project" value="ComplexPortal"/>
</dbReference>
<dbReference type="GO" id="GO:0006122">
    <property type="term" value="P:mitochondrial electron transport, ubiquinol to cytochrome c"/>
    <property type="evidence" value="ECO:0000314"/>
    <property type="project" value="ComplexPortal"/>
</dbReference>
<dbReference type="FunFam" id="1.10.760.10:FF:000002">
    <property type="entry name" value="Cytochrome c1, heme protein"/>
    <property type="match status" value="1"/>
</dbReference>
<dbReference type="FunFam" id="1.20.5.100:FF:000003">
    <property type="entry name" value="Cytochrome c1, heme protein, mitochondrial"/>
    <property type="match status" value="1"/>
</dbReference>
<dbReference type="Gene3D" id="1.10.760.10">
    <property type="entry name" value="Cytochrome c-like domain"/>
    <property type="match status" value="1"/>
</dbReference>
<dbReference type="Gene3D" id="1.20.5.100">
    <property type="entry name" value="Cytochrome c1, transmembrane anchor, C-terminal"/>
    <property type="match status" value="1"/>
</dbReference>
<dbReference type="InterPro" id="IPR009056">
    <property type="entry name" value="Cyt_c-like_dom"/>
</dbReference>
<dbReference type="InterPro" id="IPR036909">
    <property type="entry name" value="Cyt_c-like_dom_sf"/>
</dbReference>
<dbReference type="InterPro" id="IPR002326">
    <property type="entry name" value="Cyt_c1"/>
</dbReference>
<dbReference type="InterPro" id="IPR021157">
    <property type="entry name" value="Cyt_c1_TM_anchor_C"/>
</dbReference>
<dbReference type="PANTHER" id="PTHR10266">
    <property type="entry name" value="CYTOCHROME C1"/>
    <property type="match status" value="1"/>
</dbReference>
<dbReference type="PANTHER" id="PTHR10266:SF3">
    <property type="entry name" value="CYTOCHROME C1, HEME PROTEIN, MITOCHONDRIAL"/>
    <property type="match status" value="1"/>
</dbReference>
<dbReference type="Pfam" id="PF02167">
    <property type="entry name" value="Cytochrom_C1"/>
    <property type="match status" value="1"/>
</dbReference>
<dbReference type="PRINTS" id="PR00603">
    <property type="entry name" value="CYTOCHROMEC1"/>
</dbReference>
<dbReference type="SUPFAM" id="SSF46626">
    <property type="entry name" value="Cytochrome c"/>
    <property type="match status" value="1"/>
</dbReference>
<dbReference type="SUPFAM" id="SSF81496">
    <property type="entry name" value="Cytochrome c1 subunit of cytochrome bc1 complex (Ubiquinol-cytochrome c reductase), transmembrane anchor"/>
    <property type="match status" value="1"/>
</dbReference>
<dbReference type="PROSITE" id="PS51007">
    <property type="entry name" value="CYTC"/>
    <property type="match status" value="1"/>
</dbReference>
<feature type="transit peptide" description="Mitochondrion" evidence="12 13">
    <location>
        <begin position="1"/>
        <end position="61"/>
    </location>
</feature>
<feature type="chain" id="PRO_0000006566" description="Cytochrome c1, heme protein, mitochondrial">
    <location>
        <begin position="62"/>
        <end position="309"/>
    </location>
</feature>
<feature type="topological domain" description="Mitochondrial intermembrane" evidence="9 10 13">
    <location>
        <begin position="62"/>
        <end position="262"/>
    </location>
</feature>
<feature type="transmembrane region" description="Helical" evidence="9 10">
    <location>
        <begin position="263"/>
        <end position="296"/>
    </location>
</feature>
<feature type="topological domain" description="Mitochondrial matrix" evidence="9 10 13">
    <location>
        <begin position="297"/>
        <end position="309"/>
    </location>
</feature>
<feature type="domain" description="Cytochrome c" evidence="1">
    <location>
        <begin position="88"/>
        <end position="241"/>
    </location>
</feature>
<feature type="region of interest" description="Disordered" evidence="2">
    <location>
        <begin position="131"/>
        <end position="168"/>
    </location>
</feature>
<feature type="compositionally biased region" description="Acidic residues" evidence="2">
    <location>
        <begin position="131"/>
        <end position="140"/>
    </location>
</feature>
<feature type="binding site" description="covalent" evidence="5 7 9 10 16 17">
    <location>
        <position position="101"/>
    </location>
    <ligand>
        <name>heme c</name>
        <dbReference type="ChEBI" id="CHEBI:61717"/>
    </ligand>
</feature>
<feature type="binding site" description="covalent" evidence="5 7 9 10 16 17">
    <location>
        <position position="104"/>
    </location>
    <ligand>
        <name>heme c</name>
        <dbReference type="ChEBI" id="CHEBI:61717"/>
    </ligand>
</feature>
<feature type="binding site" description="axial binding residue" evidence="7 9 10 17">
    <location>
        <position position="105"/>
    </location>
    <ligand>
        <name>heme c</name>
        <dbReference type="ChEBI" id="CHEBI:61717"/>
    </ligand>
    <ligandPart>
        <name>Fe</name>
        <dbReference type="ChEBI" id="CHEBI:18248"/>
    </ligandPart>
</feature>
<feature type="binding site" description="axial binding residue" evidence="5 7 9 10 16 17">
    <location>
        <position position="225"/>
    </location>
    <ligand>
        <name>heme c</name>
        <dbReference type="ChEBI" id="CHEBI:61717"/>
    </ligand>
    <ligandPart>
        <name>Fe</name>
        <dbReference type="ChEBI" id="CHEBI:18248"/>
    </ligandPart>
</feature>
<feature type="mutagenesis site" description="Abolishes catalytic activity." evidence="6">
    <original>R</original>
    <variation>G</variation>
    <location>
        <position position="166"/>
    </location>
</feature>
<feature type="mutagenesis site" description="Loss of RIP1 from the bc1 complex.">
    <original>K</original>
    <variation>A</variation>
    <location>
        <position position="272"/>
    </location>
</feature>
<feature type="mutagenesis site" description="Loss of CYT1 and COB from the bc1 complex; when associated with L-289 and L-296." evidence="7">
    <original>K</original>
    <variation>L</variation>
    <location>
        <position position="288"/>
    </location>
</feature>
<feature type="mutagenesis site" description="Loss of CYT1 and COB from the bc1 complex; when associated with L-288 and L-296." evidence="7">
    <original>K</original>
    <variation>L</variation>
    <location>
        <position position="289"/>
    </location>
</feature>
<feature type="mutagenesis site" description="Loss of CYT1 and COB from the bc1 complex; when associated with L-288 and L-289." evidence="7">
    <original>K</original>
    <variation>L</variation>
    <location>
        <position position="296"/>
    </location>
</feature>
<feature type="helix" evidence="19">
    <location>
        <begin position="64"/>
        <end position="67"/>
    </location>
</feature>
<feature type="strand" evidence="23">
    <location>
        <begin position="80"/>
        <end position="82"/>
    </location>
</feature>
<feature type="helix" evidence="19">
    <location>
        <begin position="87"/>
        <end position="99"/>
    </location>
</feature>
<feature type="helix" evidence="19">
    <location>
        <begin position="101"/>
        <end position="103"/>
    </location>
</feature>
<feature type="helix" evidence="19">
    <location>
        <begin position="112"/>
        <end position="115"/>
    </location>
</feature>
<feature type="turn" evidence="19">
    <location>
        <begin position="116"/>
        <end position="118"/>
    </location>
</feature>
<feature type="helix" evidence="19">
    <location>
        <begin position="122"/>
        <end position="129"/>
    </location>
</feature>
<feature type="strand" evidence="19">
    <location>
        <begin position="132"/>
        <end position="135"/>
    </location>
</feature>
<feature type="strand" evidence="20">
    <location>
        <begin position="140"/>
        <end position="142"/>
    </location>
</feature>
<feature type="strand" evidence="19">
    <location>
        <begin position="146"/>
        <end position="148"/>
    </location>
</feature>
<feature type="strand" evidence="21">
    <location>
        <begin position="153"/>
        <end position="155"/>
    </location>
</feature>
<feature type="strand" evidence="20">
    <location>
        <begin position="158"/>
        <end position="161"/>
    </location>
</feature>
<feature type="helix" evidence="19">
    <location>
        <begin position="162"/>
        <end position="167"/>
    </location>
</feature>
<feature type="turn" evidence="19">
    <location>
        <begin position="168"/>
        <end position="171"/>
    </location>
</feature>
<feature type="helix" evidence="21">
    <location>
        <begin position="177"/>
        <end position="179"/>
    </location>
</feature>
<feature type="turn" evidence="19">
    <location>
        <begin position="180"/>
        <end position="182"/>
    </location>
</feature>
<feature type="strand" evidence="20">
    <location>
        <begin position="183"/>
        <end position="186"/>
    </location>
</feature>
<feature type="helix" evidence="19">
    <location>
        <begin position="187"/>
        <end position="196"/>
    </location>
</feature>
<feature type="strand" evidence="18">
    <location>
        <begin position="216"/>
        <end position="218"/>
    </location>
</feature>
<feature type="strand" evidence="19">
    <location>
        <begin position="221"/>
        <end position="225"/>
    </location>
</feature>
<feature type="strand" evidence="22">
    <location>
        <begin position="231"/>
        <end position="233"/>
    </location>
</feature>
<feature type="strand" evidence="22">
    <location>
        <begin position="237"/>
        <end position="239"/>
    </location>
</feature>
<feature type="helix" evidence="19">
    <location>
        <begin position="244"/>
        <end position="259"/>
    </location>
</feature>
<feature type="helix" evidence="19">
    <location>
        <begin position="263"/>
        <end position="296"/>
    </location>
</feature>
<feature type="strand" evidence="19">
    <location>
        <begin position="299"/>
        <end position="302"/>
    </location>
</feature>
<organism>
    <name type="scientific">Saccharomyces cerevisiae (strain ATCC 204508 / S288c)</name>
    <name type="common">Baker's yeast</name>
    <dbReference type="NCBI Taxonomy" id="559292"/>
    <lineage>
        <taxon>Eukaryota</taxon>
        <taxon>Fungi</taxon>
        <taxon>Dikarya</taxon>
        <taxon>Ascomycota</taxon>
        <taxon>Saccharomycotina</taxon>
        <taxon>Saccharomycetes</taxon>
        <taxon>Saccharomycetales</taxon>
        <taxon>Saccharomycetaceae</taxon>
        <taxon>Saccharomyces</taxon>
    </lineage>
</organism>
<keyword id="KW-0002">3D-structure</keyword>
<keyword id="KW-0249">Electron transport</keyword>
<keyword id="KW-0349">Heme</keyword>
<keyword id="KW-0408">Iron</keyword>
<keyword id="KW-0472">Membrane</keyword>
<keyword id="KW-0479">Metal-binding</keyword>
<keyword id="KW-0496">Mitochondrion</keyword>
<keyword id="KW-0999">Mitochondrion inner membrane</keyword>
<keyword id="KW-1185">Reference proteome</keyword>
<keyword id="KW-0679">Respiratory chain</keyword>
<keyword id="KW-0809">Transit peptide</keyword>
<keyword id="KW-1278">Translocase</keyword>
<keyword id="KW-0812">Transmembrane</keyword>
<keyword id="KW-1133">Transmembrane helix</keyword>
<keyword id="KW-0813">Transport</keyword>